<sequence>MNLLIIGLPGAGKGTQAAKIVEEFGVAHISTGDMFRAAMANQTEMGRLAKSYIDKGELVPDEVTNGIVKERLAEDDIAEKGFLLDGYPRTIEQAHALDATLEELGLRLDGVINIKVDPSCLVERLSGRIINRKTGETFHKVFNPPVDYKEEDYYQREDDKPETVKRRLDVNMAQGEPILEHYRKLGLVTDIEGNQEITDVFADVEKALLELK</sequence>
<gene>
    <name evidence="1" type="primary">adk</name>
    <name type="ordered locus">MGAS2096_Spy0068</name>
</gene>
<dbReference type="EC" id="2.7.4.3" evidence="1"/>
<dbReference type="EMBL" id="CP000261">
    <property type="protein sequence ID" value="ABF35120.1"/>
    <property type="molecule type" value="Genomic_DNA"/>
</dbReference>
<dbReference type="SMR" id="Q1JE38"/>
<dbReference type="KEGG" id="spj:MGAS2096_Spy0068"/>
<dbReference type="HOGENOM" id="CLU_032354_1_2_9"/>
<dbReference type="UniPathway" id="UPA00588">
    <property type="reaction ID" value="UER00649"/>
</dbReference>
<dbReference type="GO" id="GO:0005737">
    <property type="term" value="C:cytoplasm"/>
    <property type="evidence" value="ECO:0007669"/>
    <property type="project" value="UniProtKB-SubCell"/>
</dbReference>
<dbReference type="GO" id="GO:0004017">
    <property type="term" value="F:adenylate kinase activity"/>
    <property type="evidence" value="ECO:0007669"/>
    <property type="project" value="UniProtKB-UniRule"/>
</dbReference>
<dbReference type="GO" id="GO:0005524">
    <property type="term" value="F:ATP binding"/>
    <property type="evidence" value="ECO:0007669"/>
    <property type="project" value="UniProtKB-UniRule"/>
</dbReference>
<dbReference type="GO" id="GO:0044209">
    <property type="term" value="P:AMP salvage"/>
    <property type="evidence" value="ECO:0007669"/>
    <property type="project" value="UniProtKB-UniRule"/>
</dbReference>
<dbReference type="CDD" id="cd01428">
    <property type="entry name" value="ADK"/>
    <property type="match status" value="1"/>
</dbReference>
<dbReference type="FunFam" id="3.40.50.300:FF:000106">
    <property type="entry name" value="Adenylate kinase mitochondrial"/>
    <property type="match status" value="1"/>
</dbReference>
<dbReference type="Gene3D" id="3.40.50.300">
    <property type="entry name" value="P-loop containing nucleotide triphosphate hydrolases"/>
    <property type="match status" value="1"/>
</dbReference>
<dbReference type="HAMAP" id="MF_00235">
    <property type="entry name" value="Adenylate_kinase_Adk"/>
    <property type="match status" value="1"/>
</dbReference>
<dbReference type="InterPro" id="IPR006259">
    <property type="entry name" value="Adenyl_kin_sub"/>
</dbReference>
<dbReference type="InterPro" id="IPR000850">
    <property type="entry name" value="Adenylat/UMP-CMP_kin"/>
</dbReference>
<dbReference type="InterPro" id="IPR033690">
    <property type="entry name" value="Adenylat_kinase_CS"/>
</dbReference>
<dbReference type="InterPro" id="IPR027417">
    <property type="entry name" value="P-loop_NTPase"/>
</dbReference>
<dbReference type="NCBIfam" id="TIGR01351">
    <property type="entry name" value="adk"/>
    <property type="match status" value="1"/>
</dbReference>
<dbReference type="NCBIfam" id="NF001380">
    <property type="entry name" value="PRK00279.1-2"/>
    <property type="match status" value="1"/>
</dbReference>
<dbReference type="NCBIfam" id="NF001381">
    <property type="entry name" value="PRK00279.1-3"/>
    <property type="match status" value="1"/>
</dbReference>
<dbReference type="NCBIfam" id="NF001382">
    <property type="entry name" value="PRK00279.1-4"/>
    <property type="match status" value="1"/>
</dbReference>
<dbReference type="NCBIfam" id="NF011100">
    <property type="entry name" value="PRK14527.1"/>
    <property type="match status" value="1"/>
</dbReference>
<dbReference type="PANTHER" id="PTHR23359">
    <property type="entry name" value="NUCLEOTIDE KINASE"/>
    <property type="match status" value="1"/>
</dbReference>
<dbReference type="Pfam" id="PF00406">
    <property type="entry name" value="ADK"/>
    <property type="match status" value="1"/>
</dbReference>
<dbReference type="PRINTS" id="PR00094">
    <property type="entry name" value="ADENYLTKNASE"/>
</dbReference>
<dbReference type="SUPFAM" id="SSF52540">
    <property type="entry name" value="P-loop containing nucleoside triphosphate hydrolases"/>
    <property type="match status" value="1"/>
</dbReference>
<dbReference type="PROSITE" id="PS00113">
    <property type="entry name" value="ADENYLATE_KINASE"/>
    <property type="match status" value="1"/>
</dbReference>
<evidence type="ECO:0000255" key="1">
    <source>
        <dbReference type="HAMAP-Rule" id="MF_00235"/>
    </source>
</evidence>
<feature type="chain" id="PRO_1000058913" description="Adenylate kinase">
    <location>
        <begin position="1"/>
        <end position="212"/>
    </location>
</feature>
<feature type="region of interest" description="NMP" evidence="1">
    <location>
        <begin position="30"/>
        <end position="59"/>
    </location>
</feature>
<feature type="region of interest" description="LID" evidence="1">
    <location>
        <begin position="127"/>
        <end position="159"/>
    </location>
</feature>
<feature type="binding site" evidence="1">
    <location>
        <begin position="10"/>
        <end position="15"/>
    </location>
    <ligand>
        <name>ATP</name>
        <dbReference type="ChEBI" id="CHEBI:30616"/>
    </ligand>
</feature>
<feature type="binding site" evidence="1">
    <location>
        <position position="31"/>
    </location>
    <ligand>
        <name>AMP</name>
        <dbReference type="ChEBI" id="CHEBI:456215"/>
    </ligand>
</feature>
<feature type="binding site" evidence="1">
    <location>
        <position position="36"/>
    </location>
    <ligand>
        <name>AMP</name>
        <dbReference type="ChEBI" id="CHEBI:456215"/>
    </ligand>
</feature>
<feature type="binding site" evidence="1">
    <location>
        <begin position="57"/>
        <end position="59"/>
    </location>
    <ligand>
        <name>AMP</name>
        <dbReference type="ChEBI" id="CHEBI:456215"/>
    </ligand>
</feature>
<feature type="binding site" evidence="1">
    <location>
        <begin position="86"/>
        <end position="89"/>
    </location>
    <ligand>
        <name>AMP</name>
        <dbReference type="ChEBI" id="CHEBI:456215"/>
    </ligand>
</feature>
<feature type="binding site" evidence="1">
    <location>
        <position position="93"/>
    </location>
    <ligand>
        <name>AMP</name>
        <dbReference type="ChEBI" id="CHEBI:456215"/>
    </ligand>
</feature>
<feature type="binding site" evidence="1">
    <location>
        <position position="128"/>
    </location>
    <ligand>
        <name>ATP</name>
        <dbReference type="ChEBI" id="CHEBI:30616"/>
    </ligand>
</feature>
<feature type="binding site" evidence="1">
    <location>
        <begin position="137"/>
        <end position="138"/>
    </location>
    <ligand>
        <name>ATP</name>
        <dbReference type="ChEBI" id="CHEBI:30616"/>
    </ligand>
</feature>
<feature type="binding site" evidence="1">
    <location>
        <position position="156"/>
    </location>
    <ligand>
        <name>AMP</name>
        <dbReference type="ChEBI" id="CHEBI:456215"/>
    </ligand>
</feature>
<feature type="binding site" evidence="1">
    <location>
        <position position="167"/>
    </location>
    <ligand>
        <name>AMP</name>
        <dbReference type="ChEBI" id="CHEBI:456215"/>
    </ligand>
</feature>
<feature type="binding site" evidence="1">
    <location>
        <position position="195"/>
    </location>
    <ligand>
        <name>ATP</name>
        <dbReference type="ChEBI" id="CHEBI:30616"/>
    </ligand>
</feature>
<name>KAD_STRPB</name>
<protein>
    <recommendedName>
        <fullName evidence="1">Adenylate kinase</fullName>
        <shortName evidence="1">AK</shortName>
        <ecNumber evidence="1">2.7.4.3</ecNumber>
    </recommendedName>
    <alternativeName>
        <fullName evidence="1">ATP-AMP transphosphorylase</fullName>
    </alternativeName>
    <alternativeName>
        <fullName evidence="1">ATP:AMP phosphotransferase</fullName>
    </alternativeName>
    <alternativeName>
        <fullName evidence="1">Adenylate monophosphate kinase</fullName>
    </alternativeName>
</protein>
<proteinExistence type="inferred from homology"/>
<reference key="1">
    <citation type="journal article" date="2006" name="Proc. Natl. Acad. Sci. U.S.A.">
        <title>Molecular genetic anatomy of inter- and intraserotype variation in the human bacterial pathogen group A Streptococcus.</title>
        <authorList>
            <person name="Beres S.B."/>
            <person name="Richter E.W."/>
            <person name="Nagiec M.J."/>
            <person name="Sumby P."/>
            <person name="Porcella S.F."/>
            <person name="DeLeo F.R."/>
            <person name="Musser J.M."/>
        </authorList>
    </citation>
    <scope>NUCLEOTIDE SEQUENCE [LARGE SCALE GENOMIC DNA]</scope>
    <source>
        <strain>MGAS2096</strain>
    </source>
</reference>
<accession>Q1JE38</accession>
<comment type="function">
    <text evidence="1">Catalyzes the reversible transfer of the terminal phosphate group between ATP and AMP. Plays an important role in cellular energy homeostasis and in adenine nucleotide metabolism.</text>
</comment>
<comment type="catalytic activity">
    <reaction evidence="1">
        <text>AMP + ATP = 2 ADP</text>
        <dbReference type="Rhea" id="RHEA:12973"/>
        <dbReference type="ChEBI" id="CHEBI:30616"/>
        <dbReference type="ChEBI" id="CHEBI:456215"/>
        <dbReference type="ChEBI" id="CHEBI:456216"/>
        <dbReference type="EC" id="2.7.4.3"/>
    </reaction>
</comment>
<comment type="pathway">
    <text evidence="1">Purine metabolism; AMP biosynthesis via salvage pathway; AMP from ADP: step 1/1.</text>
</comment>
<comment type="subunit">
    <text evidence="1">Monomer.</text>
</comment>
<comment type="subcellular location">
    <subcellularLocation>
        <location evidence="1">Cytoplasm</location>
    </subcellularLocation>
</comment>
<comment type="domain">
    <text evidence="1">Consists of three domains, a large central CORE domain and two small peripheral domains, NMPbind and LID, which undergo movements during catalysis. The LID domain closes over the site of phosphoryl transfer upon ATP binding. Assembling and dissambling the active center during each catalytic cycle provides an effective means to prevent ATP hydrolysis.</text>
</comment>
<comment type="similarity">
    <text evidence="1">Belongs to the adenylate kinase family.</text>
</comment>
<organism>
    <name type="scientific">Streptococcus pyogenes serotype M12 (strain MGAS2096)</name>
    <dbReference type="NCBI Taxonomy" id="370553"/>
    <lineage>
        <taxon>Bacteria</taxon>
        <taxon>Bacillati</taxon>
        <taxon>Bacillota</taxon>
        <taxon>Bacilli</taxon>
        <taxon>Lactobacillales</taxon>
        <taxon>Streptococcaceae</taxon>
        <taxon>Streptococcus</taxon>
    </lineage>
</organism>
<keyword id="KW-0067">ATP-binding</keyword>
<keyword id="KW-0963">Cytoplasm</keyword>
<keyword id="KW-0418">Kinase</keyword>
<keyword id="KW-0545">Nucleotide biosynthesis</keyword>
<keyword id="KW-0547">Nucleotide-binding</keyword>
<keyword id="KW-0808">Transferase</keyword>